<comment type="function">
    <text evidence="1">Acts as an anti-FlhC(2)FlhD(4) factor by binding to FlhD, decreasing its ability to bind DNA, and thus negatively regulates expression of flagellar class II operons, decreasing motility in nutrient-poor medium. Required for resistance to host phagocyte oxidase (By similarity).</text>
</comment>
<comment type="subunit">
    <text evidence="1">Interacts with FlhD in the FlhC(2)FlhD(4) heterohexamer, inhibiting its ability to activate transcription.</text>
</comment>
<comment type="similarity">
    <text evidence="2">Belongs to the YdiV family.</text>
</comment>
<evidence type="ECO:0000250" key="1"/>
<evidence type="ECO:0000305" key="2"/>
<feature type="chain" id="PRO_0000346868" description="Anti-FlhC(2)FlhD(4) factor YdiV">
    <location>
        <begin position="1"/>
        <end position="237"/>
    </location>
</feature>
<feature type="domain" description="EAL">
    <location>
        <begin position="1"/>
        <end position="237"/>
    </location>
</feature>
<keyword id="KW-0678">Repressor</keyword>
<keyword id="KW-0804">Transcription</keyword>
<keyword id="KW-0805">Transcription regulation</keyword>
<keyword id="KW-0843">Virulence</keyword>
<dbReference type="EMBL" id="CP000886">
    <property type="protein sequence ID" value="ABX67379.1"/>
    <property type="molecule type" value="Genomic_DNA"/>
</dbReference>
<dbReference type="RefSeq" id="WP_000562006.1">
    <property type="nucleotide sequence ID" value="NC_010102.1"/>
</dbReference>
<dbReference type="SMR" id="A9N230"/>
<dbReference type="KEGG" id="spq:SPAB_01992"/>
<dbReference type="PATRIC" id="fig|1016998.12.peg.1880"/>
<dbReference type="HOGENOM" id="CLU_089254_1_1_6"/>
<dbReference type="BioCyc" id="SENT1016998:SPAB_RS08125-MONOMER"/>
<dbReference type="Proteomes" id="UP000008556">
    <property type="component" value="Chromosome"/>
</dbReference>
<dbReference type="Gene3D" id="3.20.20.450">
    <property type="entry name" value="EAL domain"/>
    <property type="match status" value="1"/>
</dbReference>
<dbReference type="InterPro" id="IPR001633">
    <property type="entry name" value="EAL_dom"/>
</dbReference>
<dbReference type="InterPro" id="IPR035919">
    <property type="entry name" value="EAL_sf"/>
</dbReference>
<dbReference type="Pfam" id="PF00563">
    <property type="entry name" value="EAL"/>
    <property type="match status" value="1"/>
</dbReference>
<dbReference type="SUPFAM" id="SSF141868">
    <property type="entry name" value="EAL domain-like"/>
    <property type="match status" value="1"/>
</dbReference>
<reference key="1">
    <citation type="submission" date="2007-11" db="EMBL/GenBank/DDBJ databases">
        <authorList>
            <consortium name="The Salmonella enterica serovar Paratyphi B Genome Sequencing Project"/>
            <person name="McClelland M."/>
            <person name="Sanderson E.K."/>
            <person name="Porwollik S."/>
            <person name="Spieth J."/>
            <person name="Clifton W.S."/>
            <person name="Fulton R."/>
            <person name="Cordes M."/>
            <person name="Wollam A."/>
            <person name="Shah N."/>
            <person name="Pepin K."/>
            <person name="Bhonagiri V."/>
            <person name="Nash W."/>
            <person name="Johnson M."/>
            <person name="Thiruvilangam P."/>
            <person name="Wilson R."/>
        </authorList>
    </citation>
    <scope>NUCLEOTIDE SEQUENCE [LARGE SCALE GENOMIC DNA]</scope>
    <source>
        <strain>ATCC BAA-1250 / SPB7</strain>
    </source>
</reference>
<accession>A9N230</accession>
<gene>
    <name type="primary">ydiV</name>
    <name type="ordered locus">SPAB_01992</name>
</gene>
<protein>
    <recommendedName>
        <fullName>Anti-FlhC(2)FlhD(4) factor YdiV</fullName>
    </recommendedName>
</protein>
<organism>
    <name type="scientific">Salmonella paratyphi B (strain ATCC BAA-1250 / SPB7)</name>
    <dbReference type="NCBI Taxonomy" id="1016998"/>
    <lineage>
        <taxon>Bacteria</taxon>
        <taxon>Pseudomonadati</taxon>
        <taxon>Pseudomonadota</taxon>
        <taxon>Gammaproteobacteria</taxon>
        <taxon>Enterobacterales</taxon>
        <taxon>Enterobacteriaceae</taxon>
        <taxon>Salmonella</taxon>
    </lineage>
</organism>
<name>YDIV_SALPB</name>
<proteinExistence type="inferred from homology"/>
<sequence length="237" mass="26414">MIASLDELYHSELFFLPVMDENARLVGLEIIATFAAEDGAVRMPTELVAPRLSVEEQYCLFVEKLALLETCQHFFIQHKLIAWLNLPPAISDLLLLDSELFSRAARFPFLELAINENYPGLNQGKNNETLANLAMHFPLMLANFGAGEASTKAIFDGLFKRVMLDKNFIQQRAEMISFEPFMHAIVAQISSSCESLMIAGIDTEAMFARAAPLGFSAFQGGLWPSVPVSQLIKLVQR</sequence>